<evidence type="ECO:0000255" key="1">
    <source>
        <dbReference type="HAMAP-Rule" id="MF_01625"/>
    </source>
</evidence>
<feature type="chain" id="PRO_1000069603" description="Regulatory ATPase RavA">
    <location>
        <begin position="1"/>
        <end position="512"/>
    </location>
</feature>
<feature type="binding site" evidence="1">
    <location>
        <position position="23"/>
    </location>
    <ligand>
        <name>ADP</name>
        <dbReference type="ChEBI" id="CHEBI:456216"/>
    </ligand>
</feature>
<feature type="binding site" evidence="1">
    <location>
        <position position="49"/>
    </location>
    <ligand>
        <name>ADP</name>
        <dbReference type="ChEBI" id="CHEBI:456216"/>
    </ligand>
</feature>
<feature type="binding site" evidence="1">
    <location>
        <position position="50"/>
    </location>
    <ligand>
        <name>ADP</name>
        <dbReference type="ChEBI" id="CHEBI:456216"/>
    </ligand>
</feature>
<feature type="binding site" evidence="1">
    <location>
        <position position="51"/>
    </location>
    <ligand>
        <name>ADP</name>
        <dbReference type="ChEBI" id="CHEBI:456216"/>
    </ligand>
</feature>
<feature type="binding site" evidence="1">
    <location>
        <position position="52"/>
    </location>
    <ligand>
        <name>ADP</name>
        <dbReference type="ChEBI" id="CHEBI:456216"/>
    </ligand>
</feature>
<feature type="binding site" evidence="1">
    <location>
        <position position="53"/>
    </location>
    <ligand>
        <name>ADP</name>
        <dbReference type="ChEBI" id="CHEBI:456216"/>
    </ligand>
</feature>
<feature type="binding site" evidence="1">
    <location>
        <position position="54"/>
    </location>
    <ligand>
        <name>ADP</name>
        <dbReference type="ChEBI" id="CHEBI:456216"/>
    </ligand>
</feature>
<feature type="binding site" evidence="1">
    <location>
        <position position="196"/>
    </location>
    <ligand>
        <name>ADP</name>
        <dbReference type="ChEBI" id="CHEBI:456216"/>
    </ligand>
</feature>
<name>RAVA_YERPP</name>
<accession>A4TSH9</accession>
<sequence>MAQSSQLAERISRLSHALESGLYERQEAIRLCLLAALSGESVFLLGPPGIAKSLIARRLKFAFRHARAFEYLMTRFSTPEEVFGPLSIQALKEEGRYQRMTGGYLPEAEIVFLDEIWKAGPAILNTLLTAINERRFRNGDREDSIPMRLLVTASNELPDADSSLEALYDRMLIRLWLDRVQEKQNFRSLLISRQNENHNPVAENLSITDEEFHQWQPLIDKITLPDHCFELIFQLRQRLSALEHAPYVSDRRWKKALRLLQASAFFSGRDEITPIDLILLKDCLWHDLNSFKLLQQQLEQLLTEQGYQQQSLLMKLQDINSKWLQHQQQQSDHQALTVVKQSGMFSRKAQYALPDNLTDSTLTLLLQKPLNLHDIQVNHLQVDKEALAQWLNKGGALRAKLNGVGYAQSIDAEIDDQLHIIILDVSRQPSTLSLPGATTTSVPPELLLALTKLESTLAEQRRLFSQHQPCLFTPSSWLAKIEASLLQVVEQLQFQQIQFQQRKFQQQKHSGH</sequence>
<proteinExistence type="inferred from homology"/>
<reference key="1">
    <citation type="submission" date="2007-02" db="EMBL/GenBank/DDBJ databases">
        <title>Complete sequence of chromosome of Yersinia pestis Pestoides F.</title>
        <authorList>
            <consortium name="US DOE Joint Genome Institute"/>
            <person name="Copeland A."/>
            <person name="Lucas S."/>
            <person name="Lapidus A."/>
            <person name="Barry K."/>
            <person name="Detter J.C."/>
            <person name="Glavina del Rio T."/>
            <person name="Hammon N."/>
            <person name="Israni S."/>
            <person name="Dalin E."/>
            <person name="Tice H."/>
            <person name="Pitluck S."/>
            <person name="Di Bartolo G."/>
            <person name="Chain P."/>
            <person name="Malfatti S."/>
            <person name="Shin M."/>
            <person name="Vergez L."/>
            <person name="Schmutz J."/>
            <person name="Larimer F."/>
            <person name="Land M."/>
            <person name="Hauser L."/>
            <person name="Worsham P."/>
            <person name="Chu M."/>
            <person name="Bearden S."/>
            <person name="Garcia E."/>
            <person name="Richardson P."/>
        </authorList>
    </citation>
    <scope>NUCLEOTIDE SEQUENCE [LARGE SCALE GENOMIC DNA]</scope>
    <source>
        <strain>Pestoides F</strain>
    </source>
</reference>
<protein>
    <recommendedName>
        <fullName evidence="1">Regulatory ATPase RavA</fullName>
        <ecNumber evidence="1">3.6.1.-</ecNumber>
    </recommendedName>
    <alternativeName>
        <fullName evidence="1">Regulatory ATPase variant A</fullName>
    </alternativeName>
</protein>
<dbReference type="EC" id="3.6.1.-" evidence="1"/>
<dbReference type="EMBL" id="CP000668">
    <property type="protein sequence ID" value="ABP42241.1"/>
    <property type="molecule type" value="Genomic_DNA"/>
</dbReference>
<dbReference type="RefSeq" id="WP_011191439.1">
    <property type="nucleotide sequence ID" value="NZ_CP009715.1"/>
</dbReference>
<dbReference type="SMR" id="A4TSH9"/>
<dbReference type="GeneID" id="49788032"/>
<dbReference type="KEGG" id="ypp:YPDSF_3900"/>
<dbReference type="PATRIC" id="fig|386656.14.peg.617"/>
<dbReference type="GO" id="GO:0005737">
    <property type="term" value="C:cytoplasm"/>
    <property type="evidence" value="ECO:0007669"/>
    <property type="project" value="UniProtKB-SubCell"/>
</dbReference>
<dbReference type="GO" id="GO:0005524">
    <property type="term" value="F:ATP binding"/>
    <property type="evidence" value="ECO:0007669"/>
    <property type="project" value="UniProtKB-KW"/>
</dbReference>
<dbReference type="GO" id="GO:0016887">
    <property type="term" value="F:ATP hydrolysis activity"/>
    <property type="evidence" value="ECO:0007669"/>
    <property type="project" value="UniProtKB-UniRule"/>
</dbReference>
<dbReference type="CDD" id="cd00009">
    <property type="entry name" value="AAA"/>
    <property type="match status" value="1"/>
</dbReference>
<dbReference type="Gene3D" id="1.20.58.1510">
    <property type="match status" value="1"/>
</dbReference>
<dbReference type="Gene3D" id="2.40.128.430">
    <property type="match status" value="1"/>
</dbReference>
<dbReference type="Gene3D" id="3.40.50.300">
    <property type="entry name" value="P-loop containing nucleotide triphosphate hydrolases"/>
    <property type="match status" value="1"/>
</dbReference>
<dbReference type="HAMAP" id="MF_01625">
    <property type="entry name" value="ATPase_RavA"/>
    <property type="match status" value="1"/>
</dbReference>
<dbReference type="InterPro" id="IPR003593">
    <property type="entry name" value="AAA+_ATPase"/>
</dbReference>
<dbReference type="InterPro" id="IPR023671">
    <property type="entry name" value="ATPase_RavA"/>
</dbReference>
<dbReference type="InterPro" id="IPR022547">
    <property type="entry name" value="ATPase_RavA_C"/>
</dbReference>
<dbReference type="InterPro" id="IPR045427">
    <property type="entry name" value="MoxR"/>
</dbReference>
<dbReference type="InterPro" id="IPR027417">
    <property type="entry name" value="P-loop_NTPase"/>
</dbReference>
<dbReference type="InterPro" id="IPR041538">
    <property type="entry name" value="RavA-like_AAA_lid"/>
</dbReference>
<dbReference type="InterPro" id="IPR050513">
    <property type="entry name" value="RavA_ATPases"/>
</dbReference>
<dbReference type="InterPro" id="IPR046898">
    <property type="entry name" value="RavA_LARA_dom"/>
</dbReference>
<dbReference type="InterPro" id="IPR046932">
    <property type="entry name" value="RavA_LARA_sf"/>
</dbReference>
<dbReference type="NCBIfam" id="NF010054">
    <property type="entry name" value="PRK13531.1"/>
    <property type="match status" value="1"/>
</dbReference>
<dbReference type="PANTHER" id="PTHR32204">
    <property type="entry name" value="ATPASE RAVA"/>
    <property type="match status" value="1"/>
</dbReference>
<dbReference type="PANTHER" id="PTHR32204:SF0">
    <property type="entry name" value="ATPASE RAVA"/>
    <property type="match status" value="1"/>
</dbReference>
<dbReference type="Pfam" id="PF17868">
    <property type="entry name" value="AAA_lid_8"/>
    <property type="match status" value="1"/>
</dbReference>
<dbReference type="Pfam" id="PF12592">
    <property type="entry name" value="ATPase_RavA_C"/>
    <property type="match status" value="1"/>
</dbReference>
<dbReference type="Pfam" id="PF20030">
    <property type="entry name" value="bpMoxR"/>
    <property type="match status" value="1"/>
</dbReference>
<dbReference type="Pfam" id="PF20265">
    <property type="entry name" value="LARA_dom"/>
    <property type="match status" value="1"/>
</dbReference>
<dbReference type="SMART" id="SM00382">
    <property type="entry name" value="AAA"/>
    <property type="match status" value="1"/>
</dbReference>
<dbReference type="SUPFAM" id="SSF52540">
    <property type="entry name" value="P-loop containing nucleoside triphosphate hydrolases"/>
    <property type="match status" value="1"/>
</dbReference>
<comment type="function">
    <text evidence="1">Component of the RavA-ViaA chaperone complex, which may act on the membrane to optimize the function of some of the respiratory chains. RavA functions as an ATPase.</text>
</comment>
<comment type="catalytic activity">
    <reaction evidence="1">
        <text>ATP + H2O = ADP + phosphate + H(+)</text>
        <dbReference type="Rhea" id="RHEA:13065"/>
        <dbReference type="ChEBI" id="CHEBI:15377"/>
        <dbReference type="ChEBI" id="CHEBI:15378"/>
        <dbReference type="ChEBI" id="CHEBI:30616"/>
        <dbReference type="ChEBI" id="CHEBI:43474"/>
        <dbReference type="ChEBI" id="CHEBI:456216"/>
    </reaction>
</comment>
<comment type="activity regulation">
    <text evidence="1">ATPase activity is stimulated by ViaA.</text>
</comment>
<comment type="subunit">
    <text evidence="1">Homohexamer. Interacts with ViaA.</text>
</comment>
<comment type="subcellular location">
    <subcellularLocation>
        <location evidence="1">Cytoplasm</location>
    </subcellularLocation>
</comment>
<comment type="similarity">
    <text evidence="1">Belongs to the RavA family.</text>
</comment>
<gene>
    <name evidence="1" type="primary">ravA</name>
    <name type="ordered locus">YPDSF_3900</name>
</gene>
<organism>
    <name type="scientific">Yersinia pestis (strain Pestoides F)</name>
    <dbReference type="NCBI Taxonomy" id="386656"/>
    <lineage>
        <taxon>Bacteria</taxon>
        <taxon>Pseudomonadati</taxon>
        <taxon>Pseudomonadota</taxon>
        <taxon>Gammaproteobacteria</taxon>
        <taxon>Enterobacterales</taxon>
        <taxon>Yersiniaceae</taxon>
        <taxon>Yersinia</taxon>
    </lineage>
</organism>
<keyword id="KW-0067">ATP-binding</keyword>
<keyword id="KW-0143">Chaperone</keyword>
<keyword id="KW-0963">Cytoplasm</keyword>
<keyword id="KW-0378">Hydrolase</keyword>
<keyword id="KW-0547">Nucleotide-binding</keyword>